<sequence>MTIIRKKHPLIKLINHSFIDLPTPSNISSWWNFGSLLGLCLIVQILTGLFLAMHYTSDTATAFSSVAHICRDVNYGWLIRYMHANGASMFFICLFLHVGRGVYYGSYNMIETWNMGIILLFAVMATAFMGYVLPWGQMSFWGATVITNLLSAIPYIGTTLVEWIWGGFSVDKATLTRFFAFHFILPFIITALVLVHLLFLHETGSNNPTGLNSDADKIPFHPYYTIKDFLGVLILLMAFMILTLFFPDILGDPDNYTPANPLNTPPHIKPEWYFLFAYAILRSIPNKLGGVLALILSILILSIMPLLHTSKQRALTFRPITQTMYWILVADLLILTWIGGQPVEYPFIIIGQTASIAYFAIIVIFMPIAGMIENNILDLD</sequence>
<comment type="function">
    <text evidence="2">Component of the ubiquinol-cytochrome c reductase complex (complex III or cytochrome b-c1 complex) that is part of the mitochondrial respiratory chain. The b-c1 complex mediates electron transfer from ubiquinol to cytochrome c. Contributes to the generation of a proton gradient across the mitochondrial membrane that is then used for ATP synthesis.</text>
</comment>
<comment type="cofactor">
    <cofactor evidence="2">
        <name>heme b</name>
        <dbReference type="ChEBI" id="CHEBI:60344"/>
    </cofactor>
    <text evidence="2">Binds 2 heme b groups non-covalently.</text>
</comment>
<comment type="subunit">
    <text evidence="2">The cytochrome bc1 complex contains 11 subunits: 3 respiratory subunits (MT-CYB, CYC1 and UQCRFS1), 2 core proteins (UQCRC1 and UQCRC2) and 6 low-molecular weight proteins (UQCRH/QCR6, UQCRB/QCR7, UQCRQ/QCR8, UQCR10/QCR9, UQCR11/QCR10 and a cleavage product of UQCRFS1). This cytochrome bc1 complex then forms a dimer.</text>
</comment>
<comment type="subcellular location">
    <subcellularLocation>
        <location evidence="2">Mitochondrion inner membrane</location>
        <topology evidence="2">Multi-pass membrane protein</topology>
    </subcellularLocation>
</comment>
<comment type="miscellaneous">
    <text evidence="1">Heme 1 (or BL or b562) is low-potential and absorbs at about 562 nm, and heme 2 (or BH or b566) is high-potential and absorbs at about 566 nm.</text>
</comment>
<comment type="similarity">
    <text evidence="3 4">Belongs to the cytochrome b family.</text>
</comment>
<comment type="caution">
    <text evidence="2">The full-length protein contains only eight transmembrane helices, not nine as predicted by bioinformatics tools.</text>
</comment>
<protein>
    <recommendedName>
        <fullName>Cytochrome b</fullName>
    </recommendedName>
    <alternativeName>
        <fullName>Complex III subunit 3</fullName>
    </alternativeName>
    <alternativeName>
        <fullName>Complex III subunit III</fullName>
    </alternativeName>
    <alternativeName>
        <fullName>Cytochrome b-c1 complex subunit 3</fullName>
    </alternativeName>
    <alternativeName>
        <fullName>Ubiquinol-cytochrome-c reductase complex cytochrome b subunit</fullName>
    </alternativeName>
</protein>
<organism>
    <name type="scientific">Microtus majori</name>
    <name type="common">Major's pine vole</name>
    <dbReference type="NCBI Taxonomy" id="269657"/>
    <lineage>
        <taxon>Eukaryota</taxon>
        <taxon>Metazoa</taxon>
        <taxon>Chordata</taxon>
        <taxon>Craniata</taxon>
        <taxon>Vertebrata</taxon>
        <taxon>Euteleostomi</taxon>
        <taxon>Mammalia</taxon>
        <taxon>Eutheria</taxon>
        <taxon>Euarchontoglires</taxon>
        <taxon>Glires</taxon>
        <taxon>Rodentia</taxon>
        <taxon>Myomorpha</taxon>
        <taxon>Muroidea</taxon>
        <taxon>Cricetidae</taxon>
        <taxon>Arvicolinae</taxon>
        <taxon>Microtus</taxon>
    </lineage>
</organism>
<dbReference type="EMBL" id="AY513814">
    <property type="protein sequence ID" value="AAS82806.1"/>
    <property type="molecule type" value="Genomic_DNA"/>
</dbReference>
<dbReference type="SMR" id="Q6JDS2"/>
<dbReference type="GO" id="GO:0005743">
    <property type="term" value="C:mitochondrial inner membrane"/>
    <property type="evidence" value="ECO:0007669"/>
    <property type="project" value="UniProtKB-SubCell"/>
</dbReference>
<dbReference type="GO" id="GO:0045275">
    <property type="term" value="C:respiratory chain complex III"/>
    <property type="evidence" value="ECO:0007669"/>
    <property type="project" value="InterPro"/>
</dbReference>
<dbReference type="GO" id="GO:0046872">
    <property type="term" value="F:metal ion binding"/>
    <property type="evidence" value="ECO:0007669"/>
    <property type="project" value="UniProtKB-KW"/>
</dbReference>
<dbReference type="GO" id="GO:0008121">
    <property type="term" value="F:ubiquinol-cytochrome-c reductase activity"/>
    <property type="evidence" value="ECO:0007669"/>
    <property type="project" value="InterPro"/>
</dbReference>
<dbReference type="GO" id="GO:0006122">
    <property type="term" value="P:mitochondrial electron transport, ubiquinol to cytochrome c"/>
    <property type="evidence" value="ECO:0007669"/>
    <property type="project" value="TreeGrafter"/>
</dbReference>
<dbReference type="CDD" id="cd00290">
    <property type="entry name" value="cytochrome_b_C"/>
    <property type="match status" value="1"/>
</dbReference>
<dbReference type="CDD" id="cd00284">
    <property type="entry name" value="Cytochrome_b_N"/>
    <property type="match status" value="1"/>
</dbReference>
<dbReference type="FunFam" id="1.20.810.10:FF:000002">
    <property type="entry name" value="Cytochrome b"/>
    <property type="match status" value="1"/>
</dbReference>
<dbReference type="Gene3D" id="1.20.810.10">
    <property type="entry name" value="Cytochrome Bc1 Complex, Chain C"/>
    <property type="match status" value="1"/>
</dbReference>
<dbReference type="InterPro" id="IPR005798">
    <property type="entry name" value="Cyt_b/b6_C"/>
</dbReference>
<dbReference type="InterPro" id="IPR036150">
    <property type="entry name" value="Cyt_b/b6_C_sf"/>
</dbReference>
<dbReference type="InterPro" id="IPR005797">
    <property type="entry name" value="Cyt_b/b6_N"/>
</dbReference>
<dbReference type="InterPro" id="IPR027387">
    <property type="entry name" value="Cytb/b6-like_sf"/>
</dbReference>
<dbReference type="InterPro" id="IPR030689">
    <property type="entry name" value="Cytochrome_b"/>
</dbReference>
<dbReference type="InterPro" id="IPR048260">
    <property type="entry name" value="Cytochrome_b_C_euk/bac"/>
</dbReference>
<dbReference type="InterPro" id="IPR048259">
    <property type="entry name" value="Cytochrome_b_N_euk/bac"/>
</dbReference>
<dbReference type="InterPro" id="IPR016174">
    <property type="entry name" value="Di-haem_cyt_TM"/>
</dbReference>
<dbReference type="PANTHER" id="PTHR19271">
    <property type="entry name" value="CYTOCHROME B"/>
    <property type="match status" value="1"/>
</dbReference>
<dbReference type="PANTHER" id="PTHR19271:SF16">
    <property type="entry name" value="CYTOCHROME B"/>
    <property type="match status" value="1"/>
</dbReference>
<dbReference type="Pfam" id="PF00032">
    <property type="entry name" value="Cytochrom_B_C"/>
    <property type="match status" value="1"/>
</dbReference>
<dbReference type="Pfam" id="PF00033">
    <property type="entry name" value="Cytochrome_B"/>
    <property type="match status" value="1"/>
</dbReference>
<dbReference type="PIRSF" id="PIRSF038885">
    <property type="entry name" value="COB"/>
    <property type="match status" value="1"/>
</dbReference>
<dbReference type="SUPFAM" id="SSF81648">
    <property type="entry name" value="a domain/subunit of cytochrome bc1 complex (Ubiquinol-cytochrome c reductase)"/>
    <property type="match status" value="1"/>
</dbReference>
<dbReference type="SUPFAM" id="SSF81342">
    <property type="entry name" value="Transmembrane di-heme cytochromes"/>
    <property type="match status" value="1"/>
</dbReference>
<dbReference type="PROSITE" id="PS51003">
    <property type="entry name" value="CYTB_CTER"/>
    <property type="match status" value="1"/>
</dbReference>
<dbReference type="PROSITE" id="PS51002">
    <property type="entry name" value="CYTB_NTER"/>
    <property type="match status" value="1"/>
</dbReference>
<name>CYB_MICMJ</name>
<keyword id="KW-0249">Electron transport</keyword>
<keyword id="KW-0349">Heme</keyword>
<keyword id="KW-0408">Iron</keyword>
<keyword id="KW-0472">Membrane</keyword>
<keyword id="KW-0479">Metal-binding</keyword>
<keyword id="KW-0496">Mitochondrion</keyword>
<keyword id="KW-0999">Mitochondrion inner membrane</keyword>
<keyword id="KW-0679">Respiratory chain</keyword>
<keyword id="KW-0812">Transmembrane</keyword>
<keyword id="KW-1133">Transmembrane helix</keyword>
<keyword id="KW-0813">Transport</keyword>
<keyword id="KW-0830">Ubiquinone</keyword>
<gene>
    <name type="primary">MT-CYB</name>
    <name type="synonym">COB</name>
    <name type="synonym">CYTB</name>
    <name type="synonym">MTCYB</name>
</gene>
<geneLocation type="mitochondrion"/>
<reference key="1">
    <citation type="journal article" date="2004" name="Mol. Phylogenet. Evol.">
        <title>Molecular phylogeny of the speciose vole genus Microtus (Arvicolinae, Rodentia) inferred from mitochondrial DNA sequences.</title>
        <authorList>
            <person name="Jaarola M."/>
            <person name="Martinkova N."/>
            <person name="Gunduz I."/>
            <person name="Brunhoff C."/>
            <person name="Zima J."/>
            <person name="Nadachowski A."/>
            <person name="Amori G."/>
            <person name="Bulatova N.S."/>
            <person name="Chondropoulos B."/>
            <person name="Fraguedakis-Tsolis S."/>
            <person name="Gonzalez-Esteban J."/>
            <person name="Lopez-Fuster M.J."/>
            <person name="Kandaurov A.S."/>
            <person name="Kefelioglu H."/>
            <person name="Mathias M.L."/>
            <person name="Villate I."/>
            <person name="Searle J.B."/>
        </authorList>
    </citation>
    <scope>NUCLEOTIDE SEQUENCE [GENOMIC DNA]</scope>
</reference>
<feature type="chain" id="PRO_0000255086" description="Cytochrome b">
    <location>
        <begin position="1"/>
        <end position="380"/>
    </location>
</feature>
<feature type="transmembrane region" description="Helical" evidence="2">
    <location>
        <begin position="33"/>
        <end position="53"/>
    </location>
</feature>
<feature type="transmembrane region" description="Helical" evidence="2">
    <location>
        <begin position="77"/>
        <end position="98"/>
    </location>
</feature>
<feature type="transmembrane region" description="Helical" evidence="2">
    <location>
        <begin position="113"/>
        <end position="133"/>
    </location>
</feature>
<feature type="transmembrane region" description="Helical" evidence="2">
    <location>
        <begin position="178"/>
        <end position="198"/>
    </location>
</feature>
<feature type="transmembrane region" description="Helical" evidence="2">
    <location>
        <begin position="226"/>
        <end position="246"/>
    </location>
</feature>
<feature type="transmembrane region" description="Helical" evidence="2">
    <location>
        <begin position="288"/>
        <end position="308"/>
    </location>
</feature>
<feature type="transmembrane region" description="Helical" evidence="2">
    <location>
        <begin position="320"/>
        <end position="340"/>
    </location>
</feature>
<feature type="transmembrane region" description="Helical" evidence="2">
    <location>
        <begin position="347"/>
        <end position="367"/>
    </location>
</feature>
<feature type="binding site" description="axial binding residue" evidence="2">
    <location>
        <position position="83"/>
    </location>
    <ligand>
        <name>heme b</name>
        <dbReference type="ChEBI" id="CHEBI:60344"/>
        <label>b562</label>
    </ligand>
    <ligandPart>
        <name>Fe</name>
        <dbReference type="ChEBI" id="CHEBI:18248"/>
    </ligandPart>
</feature>
<feature type="binding site" description="axial binding residue" evidence="2">
    <location>
        <position position="97"/>
    </location>
    <ligand>
        <name>heme b</name>
        <dbReference type="ChEBI" id="CHEBI:60344"/>
        <label>b566</label>
    </ligand>
    <ligandPart>
        <name>Fe</name>
        <dbReference type="ChEBI" id="CHEBI:18248"/>
    </ligandPart>
</feature>
<feature type="binding site" description="axial binding residue" evidence="2">
    <location>
        <position position="182"/>
    </location>
    <ligand>
        <name>heme b</name>
        <dbReference type="ChEBI" id="CHEBI:60344"/>
        <label>b562</label>
    </ligand>
    <ligandPart>
        <name>Fe</name>
        <dbReference type="ChEBI" id="CHEBI:18248"/>
    </ligandPart>
</feature>
<feature type="binding site" description="axial binding residue" evidence="2">
    <location>
        <position position="196"/>
    </location>
    <ligand>
        <name>heme b</name>
        <dbReference type="ChEBI" id="CHEBI:60344"/>
        <label>b566</label>
    </ligand>
    <ligandPart>
        <name>Fe</name>
        <dbReference type="ChEBI" id="CHEBI:18248"/>
    </ligandPart>
</feature>
<feature type="binding site" evidence="2">
    <location>
        <position position="201"/>
    </location>
    <ligand>
        <name>a ubiquinone</name>
        <dbReference type="ChEBI" id="CHEBI:16389"/>
    </ligand>
</feature>
<accession>Q6JDS2</accession>
<evidence type="ECO:0000250" key="1"/>
<evidence type="ECO:0000250" key="2">
    <source>
        <dbReference type="UniProtKB" id="P00157"/>
    </source>
</evidence>
<evidence type="ECO:0000255" key="3">
    <source>
        <dbReference type="PROSITE-ProRule" id="PRU00967"/>
    </source>
</evidence>
<evidence type="ECO:0000255" key="4">
    <source>
        <dbReference type="PROSITE-ProRule" id="PRU00968"/>
    </source>
</evidence>
<proteinExistence type="inferred from homology"/>